<reference key="1">
    <citation type="journal article" date="1991" name="J. Biol. Chem.">
        <title>Structural and functional conservation of synaptotagmin (p65) in Drosophila and humans.</title>
        <authorList>
            <person name="Perin M.S."/>
            <person name="Johnston P.A."/>
            <person name="Oezcelik T."/>
            <person name="Jahn R."/>
            <person name="Francke U."/>
            <person name="Suedhof T.C."/>
        </authorList>
    </citation>
    <scope>NUCLEOTIDE SEQUENCE [MRNA] (ISOFORM A)</scope>
    <scope>FUNCTION</scope>
    <scope>SUBCELLULAR LOCATION</scope>
</reference>
<reference key="2">
    <citation type="journal article" date="2000" name="Science">
        <title>The genome sequence of Drosophila melanogaster.</title>
        <authorList>
            <person name="Adams M.D."/>
            <person name="Celniker S.E."/>
            <person name="Holt R.A."/>
            <person name="Evans C.A."/>
            <person name="Gocayne J.D."/>
            <person name="Amanatides P.G."/>
            <person name="Scherer S.E."/>
            <person name="Li P.W."/>
            <person name="Hoskins R.A."/>
            <person name="Galle R.F."/>
            <person name="George R.A."/>
            <person name="Lewis S.E."/>
            <person name="Richards S."/>
            <person name="Ashburner M."/>
            <person name="Henderson S.N."/>
            <person name="Sutton G.G."/>
            <person name="Wortman J.R."/>
            <person name="Yandell M.D."/>
            <person name="Zhang Q."/>
            <person name="Chen L.X."/>
            <person name="Brandon R.C."/>
            <person name="Rogers Y.-H.C."/>
            <person name="Blazej R.G."/>
            <person name="Champe M."/>
            <person name="Pfeiffer B.D."/>
            <person name="Wan K.H."/>
            <person name="Doyle C."/>
            <person name="Baxter E.G."/>
            <person name="Helt G."/>
            <person name="Nelson C.R."/>
            <person name="Miklos G.L.G."/>
            <person name="Abril J.F."/>
            <person name="Agbayani A."/>
            <person name="An H.-J."/>
            <person name="Andrews-Pfannkoch C."/>
            <person name="Baldwin D."/>
            <person name="Ballew R.M."/>
            <person name="Basu A."/>
            <person name="Baxendale J."/>
            <person name="Bayraktaroglu L."/>
            <person name="Beasley E.M."/>
            <person name="Beeson K.Y."/>
            <person name="Benos P.V."/>
            <person name="Berman B.P."/>
            <person name="Bhandari D."/>
            <person name="Bolshakov S."/>
            <person name="Borkova D."/>
            <person name="Botchan M.R."/>
            <person name="Bouck J."/>
            <person name="Brokstein P."/>
            <person name="Brottier P."/>
            <person name="Burtis K.C."/>
            <person name="Busam D.A."/>
            <person name="Butler H."/>
            <person name="Cadieu E."/>
            <person name="Center A."/>
            <person name="Chandra I."/>
            <person name="Cherry J.M."/>
            <person name="Cawley S."/>
            <person name="Dahlke C."/>
            <person name="Davenport L.B."/>
            <person name="Davies P."/>
            <person name="de Pablos B."/>
            <person name="Delcher A."/>
            <person name="Deng Z."/>
            <person name="Mays A.D."/>
            <person name="Dew I."/>
            <person name="Dietz S.M."/>
            <person name="Dodson K."/>
            <person name="Doup L.E."/>
            <person name="Downes M."/>
            <person name="Dugan-Rocha S."/>
            <person name="Dunkov B.C."/>
            <person name="Dunn P."/>
            <person name="Durbin K.J."/>
            <person name="Evangelista C.C."/>
            <person name="Ferraz C."/>
            <person name="Ferriera S."/>
            <person name="Fleischmann W."/>
            <person name="Fosler C."/>
            <person name="Gabrielian A.E."/>
            <person name="Garg N.S."/>
            <person name="Gelbart W.M."/>
            <person name="Glasser K."/>
            <person name="Glodek A."/>
            <person name="Gong F."/>
            <person name="Gorrell J.H."/>
            <person name="Gu Z."/>
            <person name="Guan P."/>
            <person name="Harris M."/>
            <person name="Harris N.L."/>
            <person name="Harvey D.A."/>
            <person name="Heiman T.J."/>
            <person name="Hernandez J.R."/>
            <person name="Houck J."/>
            <person name="Hostin D."/>
            <person name="Houston K.A."/>
            <person name="Howland T.J."/>
            <person name="Wei M.-H."/>
            <person name="Ibegwam C."/>
            <person name="Jalali M."/>
            <person name="Kalush F."/>
            <person name="Karpen G.H."/>
            <person name="Ke Z."/>
            <person name="Kennison J.A."/>
            <person name="Ketchum K.A."/>
            <person name="Kimmel B.E."/>
            <person name="Kodira C.D."/>
            <person name="Kraft C.L."/>
            <person name="Kravitz S."/>
            <person name="Kulp D."/>
            <person name="Lai Z."/>
            <person name="Lasko P."/>
            <person name="Lei Y."/>
            <person name="Levitsky A.A."/>
            <person name="Li J.H."/>
            <person name="Li Z."/>
            <person name="Liang Y."/>
            <person name="Lin X."/>
            <person name="Liu X."/>
            <person name="Mattei B."/>
            <person name="McIntosh T.C."/>
            <person name="McLeod M.P."/>
            <person name="McPherson D."/>
            <person name="Merkulov G."/>
            <person name="Milshina N.V."/>
            <person name="Mobarry C."/>
            <person name="Morris J."/>
            <person name="Moshrefi A."/>
            <person name="Mount S.M."/>
            <person name="Moy M."/>
            <person name="Murphy B."/>
            <person name="Murphy L."/>
            <person name="Muzny D.M."/>
            <person name="Nelson D.L."/>
            <person name="Nelson D.R."/>
            <person name="Nelson K.A."/>
            <person name="Nixon K."/>
            <person name="Nusskern D.R."/>
            <person name="Pacleb J.M."/>
            <person name="Palazzolo M."/>
            <person name="Pittman G.S."/>
            <person name="Pan S."/>
            <person name="Pollard J."/>
            <person name="Puri V."/>
            <person name="Reese M.G."/>
            <person name="Reinert K."/>
            <person name="Remington K."/>
            <person name="Saunders R.D.C."/>
            <person name="Scheeler F."/>
            <person name="Shen H."/>
            <person name="Shue B.C."/>
            <person name="Siden-Kiamos I."/>
            <person name="Simpson M."/>
            <person name="Skupski M.P."/>
            <person name="Smith T.J."/>
            <person name="Spier E."/>
            <person name="Spradling A.C."/>
            <person name="Stapleton M."/>
            <person name="Strong R."/>
            <person name="Sun E."/>
            <person name="Svirskas R."/>
            <person name="Tector C."/>
            <person name="Turner R."/>
            <person name="Venter E."/>
            <person name="Wang A.H."/>
            <person name="Wang X."/>
            <person name="Wang Z.-Y."/>
            <person name="Wassarman D.A."/>
            <person name="Weinstock G.M."/>
            <person name="Weissenbach J."/>
            <person name="Williams S.M."/>
            <person name="Woodage T."/>
            <person name="Worley K.C."/>
            <person name="Wu D."/>
            <person name="Yang S."/>
            <person name="Yao Q.A."/>
            <person name="Ye J."/>
            <person name="Yeh R.-F."/>
            <person name="Zaveri J.S."/>
            <person name="Zhan M."/>
            <person name="Zhang G."/>
            <person name="Zhao Q."/>
            <person name="Zheng L."/>
            <person name="Zheng X.H."/>
            <person name="Zhong F.N."/>
            <person name="Zhong W."/>
            <person name="Zhou X."/>
            <person name="Zhu S.C."/>
            <person name="Zhu X."/>
            <person name="Smith H.O."/>
            <person name="Gibbs R.A."/>
            <person name="Myers E.W."/>
            <person name="Rubin G.M."/>
            <person name="Venter J.C."/>
        </authorList>
    </citation>
    <scope>NUCLEOTIDE SEQUENCE [LARGE SCALE GENOMIC DNA]</scope>
    <scope>RNA EDITING OF POSITION 383 AND 405</scope>
    <source>
        <strain>Berkeley</strain>
    </source>
</reference>
<reference key="3">
    <citation type="journal article" date="2002" name="Genome Biol.">
        <title>Annotation of the Drosophila melanogaster euchromatic genome: a systematic review.</title>
        <authorList>
            <person name="Misra S."/>
            <person name="Crosby M.A."/>
            <person name="Mungall C.J."/>
            <person name="Matthews B.B."/>
            <person name="Campbell K.S."/>
            <person name="Hradecky P."/>
            <person name="Huang Y."/>
            <person name="Kaminker J.S."/>
            <person name="Millburn G.H."/>
            <person name="Prochnik S.E."/>
            <person name="Smith C.D."/>
            <person name="Tupy J.L."/>
            <person name="Whitfield E.J."/>
            <person name="Bayraktaroglu L."/>
            <person name="Berman B.P."/>
            <person name="Bettencourt B.R."/>
            <person name="Celniker S.E."/>
            <person name="de Grey A.D.N.J."/>
            <person name="Drysdale R.A."/>
            <person name="Harris N.L."/>
            <person name="Richter J."/>
            <person name="Russo S."/>
            <person name="Schroeder A.J."/>
            <person name="Shu S.Q."/>
            <person name="Stapleton M."/>
            <person name="Yamada C."/>
            <person name="Ashburner M."/>
            <person name="Gelbart W.M."/>
            <person name="Rubin G.M."/>
            <person name="Lewis S.E."/>
        </authorList>
    </citation>
    <scope>GENOME REANNOTATION</scope>
    <scope>ALTERNATIVE SPLICING</scope>
    <source>
        <strain>Berkeley</strain>
    </source>
</reference>
<reference key="4">
    <citation type="submission" date="2003-02" db="EMBL/GenBank/DDBJ databases">
        <authorList>
            <person name="Stapleton M."/>
            <person name="Brokstein P."/>
            <person name="Hong L."/>
            <person name="Agbayani A."/>
            <person name="Carlson J.W."/>
            <person name="Champe M."/>
            <person name="Chavez C."/>
            <person name="Dorsett V."/>
            <person name="Dresnek D."/>
            <person name="Farfan D."/>
            <person name="Frise E."/>
            <person name="George R.A."/>
            <person name="Gonzalez M."/>
            <person name="Guarin H."/>
            <person name="Kronmiller B."/>
            <person name="Li P.W."/>
            <person name="Liao G."/>
            <person name="Miranda A."/>
            <person name="Mungall C.J."/>
            <person name="Nunoo J."/>
            <person name="Pacleb J.M."/>
            <person name="Paragas V."/>
            <person name="Park S."/>
            <person name="Patel S."/>
            <person name="Phouanenavong S."/>
            <person name="Wan K.H."/>
            <person name="Yu C."/>
            <person name="Lewis S.E."/>
            <person name="Rubin G.M."/>
            <person name="Celniker S.E."/>
        </authorList>
    </citation>
    <scope>NUCLEOTIDE SEQUENCE [LARGE SCALE MRNA] (ISOFORM B)</scope>
    <scope>RNA EDITING OF POSITION 367</scope>
    <source>
        <strain>Berkeley</strain>
        <tissue>Head</tissue>
    </source>
</reference>
<reference key="5">
    <citation type="journal article" date="2002" name="Genome Biol.">
        <title>A Drosophila full-length cDNA resource.</title>
        <authorList>
            <person name="Stapleton M."/>
            <person name="Carlson J.W."/>
            <person name="Brokstein P."/>
            <person name="Yu C."/>
            <person name="Champe M."/>
            <person name="George R.A."/>
            <person name="Guarin H."/>
            <person name="Kronmiller B."/>
            <person name="Pacleb J.M."/>
            <person name="Park S."/>
            <person name="Wan K.H."/>
            <person name="Rubin G.M."/>
            <person name="Celniker S.E."/>
        </authorList>
    </citation>
    <scope>NUCLEOTIDE SEQUENCE [LARGE SCALE MRNA] OF 169-380 (ISOFORM A)</scope>
    <source>
        <strain>Berkeley</strain>
        <tissue>Head</tissue>
    </source>
</reference>
<reference key="6">
    <citation type="journal article" date="2000" name="J. Neurosci.">
        <title>The products of the Drosophila stoned locus interact with synaptic vesicles via synaptotagmin.</title>
        <authorList>
            <person name="Phillips A.M."/>
            <person name="Smith M."/>
            <person name="Ramaswami M."/>
            <person name="Kelly L.E."/>
        </authorList>
    </citation>
    <scope>INTERACTION WITH STNA AND STNB</scope>
</reference>
<reference key="7">
    <citation type="journal article" date="2003" name="Science">
        <title>Nervous system targets of RNA editing identified by comparative genomics.</title>
        <authorList>
            <person name="Hoopengardner B."/>
            <person name="Bhalla T."/>
            <person name="Staber C."/>
            <person name="Reenan R."/>
        </authorList>
    </citation>
    <scope>RNA EDITING OF POSITIONS 367; 379; 383 AND 405</scope>
</reference>
<reference key="8">
    <citation type="journal article" date="2018" name="Exp. Mol. Med.">
        <title>Regulation of synaptic architecture and synaptic vesicle pools by Nervous wreck at Drosophila Type 1b glutamatergic synapses.</title>
        <authorList>
            <person name="Hur J.H."/>
            <person name="Lee S.H."/>
            <person name="Kim A.Y."/>
            <person name="Koh Y.H."/>
        </authorList>
    </citation>
    <scope>IDENTIFICATION IN A COMPLEX WITH NWK AND SYN</scope>
</reference>
<sequence length="474" mass="53260">MPPNAKSETDAKPEAEPAPASEPAADLESVDQKLEETHHSKFREVDRQEQEVLAEKAAEAASQRIAQVESTTRSATTEAQESTTTAVPVIKKIEHVGEVVTEVIAERTGLPTWGVVAIIILVFLVVFGIIFFCVRRFLKKRRTKDGKGKKGVDMKSVQLLGSAYKEKVQPDMEELTENAEEGDEEDKQSEQKLGRLNFKLEYDFNSNSLAVTVIQAEELPALDMGGTSDPYVKVYLLPDKKKKFETKVHRKTLSPVFNETFTFKSLPYADAMNKTLVFAIFDFDRFSKHDQIGEVKVPLCTIDLAQTIEEWRDLVSVEGEGGQEKLGDICFSLRYVPTAGKLTVVILEAKNLKKMDVGGLSDPYVKIAIMQNGKRLKKKKTSIKKCTLNPYYNESFSFEVPFEQIQKICLVVTVVDYDRIGTSEPIGRCILGCMGTGTELRHWSDMLASPRRPIAQWHTLKDPEETDEILKNMK</sequence>
<accession>P21521</accession>
<accession>A4V023</accession>
<accession>M9PB17</accession>
<accession>M9PE99</accession>
<accession>Q7KU16</accession>
<accession>Q86NN2</accession>
<accession>Q8MRR8</accession>
<accession>Q9VQG7</accession>
<accession>Q9VQG8</accession>
<organism>
    <name type="scientific">Drosophila melanogaster</name>
    <name type="common">Fruit fly</name>
    <dbReference type="NCBI Taxonomy" id="7227"/>
    <lineage>
        <taxon>Eukaryota</taxon>
        <taxon>Metazoa</taxon>
        <taxon>Ecdysozoa</taxon>
        <taxon>Arthropoda</taxon>
        <taxon>Hexapoda</taxon>
        <taxon>Insecta</taxon>
        <taxon>Pterygota</taxon>
        <taxon>Neoptera</taxon>
        <taxon>Endopterygota</taxon>
        <taxon>Diptera</taxon>
        <taxon>Brachycera</taxon>
        <taxon>Muscomorpha</taxon>
        <taxon>Ephydroidea</taxon>
        <taxon>Drosophilidae</taxon>
        <taxon>Drosophila</taxon>
        <taxon>Sophophora</taxon>
    </lineage>
</organism>
<protein>
    <recommendedName>
        <fullName>Synaptotagmin 1</fullName>
    </recommendedName>
    <alternativeName>
        <fullName>p65</fullName>
    </alternativeName>
</protein>
<gene>
    <name type="primary">Syt1</name>
    <name type="synonym">syt</name>
    <name type="ORF">CG3139</name>
</gene>
<proteinExistence type="evidence at protein level"/>
<keyword id="KW-0025">Alternative splicing</keyword>
<keyword id="KW-0106">Calcium</keyword>
<keyword id="KW-0968">Cytoplasmic vesicle</keyword>
<keyword id="KW-0472">Membrane</keyword>
<keyword id="KW-0479">Metal-binding</keyword>
<keyword id="KW-1185">Reference proteome</keyword>
<keyword id="KW-0677">Repeat</keyword>
<keyword id="KW-0691">RNA editing</keyword>
<keyword id="KW-0770">Synapse</keyword>
<keyword id="KW-0812">Transmembrane</keyword>
<keyword id="KW-1133">Transmembrane helix</keyword>
<name>SY65_DROME</name>
<evidence type="ECO:0000250" key="1"/>
<evidence type="ECO:0000255" key="2"/>
<evidence type="ECO:0000255" key="3">
    <source>
        <dbReference type="PROSITE-ProRule" id="PRU00041"/>
    </source>
</evidence>
<evidence type="ECO:0000256" key="4">
    <source>
        <dbReference type="SAM" id="MobiDB-lite"/>
    </source>
</evidence>
<evidence type="ECO:0000269" key="5">
    <source>
    </source>
</evidence>
<evidence type="ECO:0000269" key="6">
    <source>
    </source>
</evidence>
<evidence type="ECO:0000269" key="7">
    <source>
    </source>
</evidence>
<evidence type="ECO:0000269" key="8">
    <source>
    </source>
</evidence>
<evidence type="ECO:0000269" key="9">
    <source>
    </source>
</evidence>
<evidence type="ECO:0000269" key="10">
    <source ref="4"/>
</evidence>
<evidence type="ECO:0000303" key="11">
    <source ref="4"/>
</evidence>
<evidence type="ECO:0000305" key="12"/>
<feature type="chain" id="PRO_0000183986" description="Synaptotagmin 1">
    <location>
        <begin position="1"/>
        <end position="474"/>
    </location>
</feature>
<feature type="topological domain" description="Vesicular">
    <location>
        <begin position="1"/>
        <end position="107"/>
    </location>
</feature>
<feature type="transmembrane region" description="Helical" evidence="2">
    <location>
        <begin position="108"/>
        <end position="134"/>
    </location>
</feature>
<feature type="topological domain" description="Cytoplasmic">
    <location>
        <begin position="135"/>
        <end position="474"/>
    </location>
</feature>
<feature type="domain" description="C2 1" evidence="3">
    <location>
        <begin position="192"/>
        <end position="312"/>
    </location>
</feature>
<feature type="domain" description="C2 2" evidence="3">
    <location>
        <begin position="325"/>
        <end position="458"/>
    </location>
</feature>
<feature type="region of interest" description="Disordered" evidence="4">
    <location>
        <begin position="1"/>
        <end position="49"/>
    </location>
</feature>
<feature type="region of interest" description="Disordered" evidence="4">
    <location>
        <begin position="63"/>
        <end position="84"/>
    </location>
</feature>
<feature type="region of interest" description="Disordered" evidence="4">
    <location>
        <begin position="170"/>
        <end position="189"/>
    </location>
</feature>
<feature type="region of interest" description="Phospholipid binding" evidence="12">
    <location>
        <begin position="186"/>
        <end position="434"/>
    </location>
</feature>
<feature type="compositionally biased region" description="Basic and acidic residues" evidence="4">
    <location>
        <begin position="30"/>
        <end position="49"/>
    </location>
</feature>
<feature type="compositionally biased region" description="Low complexity" evidence="4">
    <location>
        <begin position="69"/>
        <end position="84"/>
    </location>
</feature>
<feature type="compositionally biased region" description="Acidic residues" evidence="4">
    <location>
        <begin position="171"/>
        <end position="187"/>
    </location>
</feature>
<feature type="binding site" evidence="3">
    <location>
        <position position="222"/>
    </location>
    <ligand>
        <name>Ca(2+)</name>
        <dbReference type="ChEBI" id="CHEBI:29108"/>
        <label>2</label>
    </ligand>
</feature>
<feature type="binding site" evidence="3">
    <location>
        <position position="223"/>
    </location>
    <ligand>
        <name>Ca(2+)</name>
        <dbReference type="ChEBI" id="CHEBI:29108"/>
        <label>1</label>
    </ligand>
</feature>
<feature type="binding site" evidence="3">
    <location>
        <position position="223"/>
    </location>
    <ligand>
        <name>Ca(2+)</name>
        <dbReference type="ChEBI" id="CHEBI:29108"/>
        <label>2</label>
    </ligand>
</feature>
<feature type="binding site" evidence="3">
    <location>
        <position position="229"/>
    </location>
    <ligand>
        <name>Ca(2+)</name>
        <dbReference type="ChEBI" id="CHEBI:29108"/>
        <label>1</label>
    </ligand>
</feature>
<feature type="binding site" evidence="3">
    <location>
        <position position="282"/>
    </location>
    <ligand>
        <name>Ca(2+)</name>
        <dbReference type="ChEBI" id="CHEBI:29108"/>
        <label>1</label>
    </ligand>
</feature>
<feature type="binding site" evidence="3">
    <location>
        <position position="282"/>
    </location>
    <ligand>
        <name>Ca(2+)</name>
        <dbReference type="ChEBI" id="CHEBI:29108"/>
        <label>2</label>
    </ligand>
</feature>
<feature type="binding site" evidence="3">
    <location>
        <position position="283"/>
    </location>
    <ligand>
        <name>Ca(2+)</name>
        <dbReference type="ChEBI" id="CHEBI:29108"/>
        <label>1</label>
    </ligand>
</feature>
<feature type="binding site" evidence="3">
    <location>
        <position position="284"/>
    </location>
    <ligand>
        <name>Ca(2+)</name>
        <dbReference type="ChEBI" id="CHEBI:29108"/>
        <label>1</label>
    </ligand>
</feature>
<feature type="binding site" evidence="3">
    <location>
        <position position="284"/>
    </location>
    <ligand>
        <name>Ca(2+)</name>
        <dbReference type="ChEBI" id="CHEBI:29108"/>
        <label>2</label>
    </ligand>
</feature>
<feature type="binding site" evidence="3">
    <location>
        <position position="284"/>
    </location>
    <ligand>
        <name>Ca(2+)</name>
        <dbReference type="ChEBI" id="CHEBI:29108"/>
        <label>3</label>
    </ligand>
</feature>
<feature type="binding site" evidence="3">
    <location>
        <position position="287"/>
    </location>
    <ligand>
        <name>Ca(2+)</name>
        <dbReference type="ChEBI" id="CHEBI:29108"/>
        <label>3</label>
    </ligand>
</feature>
<feature type="binding site" evidence="3">
    <location>
        <position position="288"/>
    </location>
    <ligand>
        <name>Ca(2+)</name>
        <dbReference type="ChEBI" id="CHEBI:29108"/>
        <label>3</label>
    </ligand>
</feature>
<feature type="binding site" evidence="3">
    <location>
        <position position="290"/>
    </location>
    <ligand>
        <name>Ca(2+)</name>
        <dbReference type="ChEBI" id="CHEBI:29108"/>
        <label>2</label>
    </ligand>
</feature>
<feature type="binding site" evidence="3">
    <location>
        <position position="290"/>
    </location>
    <ligand>
        <name>Ca(2+)</name>
        <dbReference type="ChEBI" id="CHEBI:29108"/>
        <label>3</label>
    </ligand>
</feature>
<feature type="binding site" evidence="3">
    <location>
        <position position="356"/>
    </location>
    <ligand>
        <name>Ca(2+)</name>
        <dbReference type="ChEBI" id="CHEBI:29108"/>
        <label>4</label>
    </ligand>
</feature>
<feature type="binding site" evidence="3">
    <location>
        <position position="362"/>
    </location>
    <ligand>
        <name>Ca(2+)</name>
        <dbReference type="ChEBI" id="CHEBI:29108"/>
        <label>4</label>
    </ligand>
</feature>
<feature type="binding site" evidence="3">
    <location>
        <position position="416"/>
    </location>
    <ligand>
        <name>Ca(2+)</name>
        <dbReference type="ChEBI" id="CHEBI:29108"/>
        <label>4</label>
    </ligand>
</feature>
<feature type="binding site" evidence="3">
    <location>
        <position position="418"/>
    </location>
    <ligand>
        <name>Ca(2+)</name>
        <dbReference type="ChEBI" id="CHEBI:29108"/>
        <label>4</label>
    </ligand>
</feature>
<feature type="splice variant" id="VSP_011862" description="In isoform B." evidence="11">
    <location>
        <begin position="168"/>
        <end position="169"/>
    </location>
</feature>
<feature type="splice variant" id="VSP_054628" description="In isoform F." evidence="12">
    <original>QP</original>
    <variation>SV</variation>
    <location>
        <begin position="169"/>
        <end position="170"/>
    </location>
</feature>
<feature type="splice variant" id="VSP_054629" description="In isoform F." evidence="12">
    <location>
        <begin position="171"/>
        <end position="474"/>
    </location>
</feature>
<feature type="splice variant" id="VSP_054630" description="In isoform G." evidence="12">
    <original>EKLGDICF</original>
    <variation>VVLREVNI</variation>
    <location>
        <begin position="324"/>
        <end position="331"/>
    </location>
</feature>
<feature type="splice variant" id="VSP_054631" description="In isoform E." evidence="12">
    <location>
        <begin position="324"/>
        <end position="325"/>
    </location>
</feature>
<feature type="splice variant" id="VSP_054632" description="In isoform G." evidence="12">
    <location>
        <begin position="332"/>
        <end position="474"/>
    </location>
</feature>
<feature type="sequence variant" description="In RNA edited version.">
    <original>I</original>
    <variation>V</variation>
    <location>
        <position position="367"/>
    </location>
</feature>
<feature type="sequence variant" description="In RNA edited version.">
    <original>K</original>
    <variation>R</variation>
    <location>
        <position position="379"/>
    </location>
</feature>
<feature type="sequence variant" description="In RNA edited version.">
    <original>I</original>
    <variation>V</variation>
    <location>
        <position position="383"/>
    </location>
</feature>
<feature type="sequence variant" description="In RNA edited version.">
    <original>I</original>
    <variation>M</variation>
    <location>
        <position position="405"/>
    </location>
</feature>
<feature type="sequence conflict" description="In Ref. 1; AAA28925." evidence="12" ref="1">
    <original>D</original>
    <variation>E</variation>
    <location>
        <position position="26"/>
    </location>
</feature>
<comment type="function">
    <text evidence="8">May have a regulatory role in the membrane interactions during trafficking of synaptic vesicles at the active zone of the synapse. It binds acidic phospholipids with a specificity that requires the presence of both an acidic head group and a diacyl backbone.</text>
</comment>
<comment type="cofactor">
    <cofactor evidence="3">
        <name>Ca(2+)</name>
        <dbReference type="ChEBI" id="CHEBI:29108"/>
    </cofactor>
    <text evidence="1">Binds 3 Ca(2+) ions per subunit. The ions are bound to the C2 domains.</text>
</comment>
<comment type="subunit">
    <text evidence="6 9 12">Homodimer or homotrimer (Potential). Identified in a complex with Syn and nwk (PubMed:29568072). Interacts with StnA and StnB via its second C2 domain. This interaction may mediate its retrieval from the plasma membrane, thereby facilitating the internalization of multiple synaptic vesicles from the plasma membrane.</text>
</comment>
<comment type="interaction">
    <interactant intactId="EBI-484504">
        <id>P21521</id>
    </interactant>
    <interactant intactId="EBI-604915">
        <id>Q24211</id>
        <label>stnA</label>
    </interactant>
    <organismsDiffer>false</organismsDiffer>
    <experiments>2</experiments>
</comment>
<comment type="interaction">
    <interactant intactId="EBI-484504">
        <id>P21521</id>
    </interactant>
    <interactant intactId="EBI-604879">
        <id>Q24212</id>
        <label>stnB</label>
    </interactant>
    <organismsDiffer>false</organismsDiffer>
    <experiments>5</experiments>
</comment>
<comment type="subcellular location">
    <subcellularLocation>
        <location evidence="8">Cytoplasmic vesicle</location>
        <location evidence="8">Secretory vesicle</location>
        <location evidence="8">Synaptic vesicle membrane</location>
        <topology evidence="8">Single-pass membrane protein</topology>
    </subcellularLocation>
    <subcellularLocation>
        <location evidence="8">Synapse</location>
    </subcellularLocation>
    <text>Synaptic vesicles in neurons.</text>
</comment>
<comment type="alternative products">
    <event type="alternative splicing"/>
    <isoform>
        <id>P21521-1</id>
        <name>A</name>
        <sequence type="displayed"/>
    </isoform>
    <isoform>
        <id>P21521-2</id>
        <name>B</name>
        <name>C</name>
        <name>I</name>
        <sequence type="described" ref="VSP_011862"/>
    </isoform>
    <isoform>
        <id>P21521-4</id>
        <name>E</name>
        <sequence type="described" ref="VSP_054631"/>
    </isoform>
    <isoform>
        <id>P21521-5</id>
        <name>G</name>
        <sequence type="described" ref="VSP_054630 VSP_054632"/>
    </isoform>
    <isoform>
        <id>P21521-6</id>
        <name>F</name>
        <sequence type="described" ref="VSP_054628 VSP_054629"/>
    </isoform>
</comment>
<comment type="RNA editing">
    <location>
        <position position="367" evidence="7 10"/>
    </location>
    <location>
        <position position="379" evidence="7"/>
    </location>
    <location>
        <position position="383" evidence="5 7"/>
    </location>
    <location>
        <position position="405" evidence="5 7"/>
    </location>
    <text>Partially edited.</text>
</comment>
<comment type="similarity">
    <text evidence="12">Belongs to the synaptotagmin family.</text>
</comment>
<comment type="sequence caution" evidence="12">
    <conflict type="miscellaneous discrepancy">
        <sequence resource="EMBL-CDS" id="AAM50109"/>
    </conflict>
    <text>Intron retention.</text>
</comment>
<comment type="sequence caution" evidence="12">
    <conflict type="miscellaneous discrepancy">
        <sequence resource="EMBL-CDS" id="AAM50109"/>
    </conflict>
    <text>Contaminating sequence. Potential poly-A sequence.</text>
</comment>
<dbReference type="EMBL" id="M55048">
    <property type="protein sequence ID" value="AAA28925.1"/>
    <property type="molecule type" value="mRNA"/>
</dbReference>
<dbReference type="EMBL" id="AE014134">
    <property type="protein sequence ID" value="AAF51205.1"/>
    <property type="molecule type" value="Genomic_DNA"/>
</dbReference>
<dbReference type="EMBL" id="AE014134">
    <property type="protein sequence ID" value="AAF51206.2"/>
    <property type="molecule type" value="Genomic_DNA"/>
</dbReference>
<dbReference type="EMBL" id="AE014134">
    <property type="protein sequence ID" value="AAS64625.2"/>
    <property type="molecule type" value="Genomic_DNA"/>
</dbReference>
<dbReference type="EMBL" id="AE014134">
    <property type="protein sequence ID" value="AAN10415.1"/>
    <property type="molecule type" value="Genomic_DNA"/>
</dbReference>
<dbReference type="EMBL" id="AE014134">
    <property type="protein sequence ID" value="AGB92502.1"/>
    <property type="molecule type" value="Genomic_DNA"/>
</dbReference>
<dbReference type="EMBL" id="AE014134">
    <property type="protein sequence ID" value="AGB92503.1"/>
    <property type="molecule type" value="Genomic_DNA"/>
</dbReference>
<dbReference type="EMBL" id="BT004498">
    <property type="protein sequence ID" value="AAO42662.1"/>
    <property type="molecule type" value="mRNA"/>
</dbReference>
<dbReference type="EMBL" id="AY119455">
    <property type="protein sequence ID" value="AAM50109.1"/>
    <property type="status" value="ALT_SEQ"/>
    <property type="molecule type" value="mRNA"/>
</dbReference>
<dbReference type="PIR" id="B39052">
    <property type="entry name" value="BMFFSY"/>
</dbReference>
<dbReference type="RefSeq" id="NP_001259965.1">
    <molecule id="P21521-6"/>
    <property type="nucleotide sequence ID" value="NM_001273036.1"/>
</dbReference>
<dbReference type="RefSeq" id="NP_001259966.1">
    <property type="nucleotide sequence ID" value="NM_001273037.1"/>
</dbReference>
<dbReference type="RefSeq" id="NP_001285568.1">
    <molecule id="P21521-2"/>
    <property type="nucleotide sequence ID" value="NM_001298639.1"/>
</dbReference>
<dbReference type="RefSeq" id="NP_001356906.1">
    <molecule id="P21521-5"/>
    <property type="nucleotide sequence ID" value="NM_001370000.1"/>
</dbReference>
<dbReference type="RefSeq" id="NP_523460.2">
    <molecule id="P21521-1"/>
    <property type="nucleotide sequence ID" value="NM_078736.3"/>
</dbReference>
<dbReference type="RefSeq" id="NP_722838.1">
    <molecule id="P21521-2"/>
    <property type="nucleotide sequence ID" value="NM_164501.2"/>
</dbReference>
<dbReference type="RefSeq" id="NP_722839.1">
    <molecule id="P21521-2"/>
    <property type="nucleotide sequence ID" value="NM_164502.2"/>
</dbReference>
<dbReference type="RefSeq" id="NP_995619.2">
    <molecule id="P21521-4"/>
    <property type="nucleotide sequence ID" value="NM_205897.2"/>
</dbReference>
<dbReference type="SMR" id="P21521"/>
<dbReference type="BioGRID" id="59696">
    <property type="interactions" value="17"/>
</dbReference>
<dbReference type="FunCoup" id="P21521">
    <property type="interactions" value="232"/>
</dbReference>
<dbReference type="IntAct" id="P21521">
    <property type="interactions" value="3"/>
</dbReference>
<dbReference type="STRING" id="7227.FBpp0077410"/>
<dbReference type="PaxDb" id="7227-FBpp0077410"/>
<dbReference type="EnsemblMetazoa" id="FBtr0077726">
    <molecule id="P21521-1"/>
    <property type="protein sequence ID" value="FBpp0077410"/>
    <property type="gene ID" value="FBgn0004242"/>
</dbReference>
<dbReference type="EnsemblMetazoa" id="FBtr0077727">
    <molecule id="P21521-2"/>
    <property type="protein sequence ID" value="FBpp0077411"/>
    <property type="gene ID" value="FBgn0004242"/>
</dbReference>
<dbReference type="EnsemblMetazoa" id="FBtr0077728">
    <molecule id="P21521-2"/>
    <property type="protein sequence ID" value="FBpp0077412"/>
    <property type="gene ID" value="FBgn0004242"/>
</dbReference>
<dbReference type="EnsemblMetazoa" id="FBtr0332218">
    <molecule id="P21521-4"/>
    <property type="protein sequence ID" value="FBpp0304523"/>
    <property type="gene ID" value="FBgn0004242"/>
</dbReference>
<dbReference type="EnsemblMetazoa" id="FBtr0332219">
    <molecule id="P21521-6"/>
    <property type="protein sequence ID" value="FBpp0304524"/>
    <property type="gene ID" value="FBgn0004242"/>
</dbReference>
<dbReference type="EnsemblMetazoa" id="FBtr0332220">
    <molecule id="P21521-5"/>
    <property type="protein sequence ID" value="FBpp0304525"/>
    <property type="gene ID" value="FBgn0004242"/>
</dbReference>
<dbReference type="EnsemblMetazoa" id="FBtr0345331">
    <molecule id="P21521-2"/>
    <property type="protein sequence ID" value="FBpp0311487"/>
    <property type="gene ID" value="FBgn0004242"/>
</dbReference>
<dbReference type="GeneID" id="33473"/>
<dbReference type="KEGG" id="dme:Dmel_CG3139"/>
<dbReference type="UCSC" id="CG3139-RC">
    <property type="organism name" value="d. melanogaster"/>
</dbReference>
<dbReference type="AGR" id="FB:FBgn0004242"/>
<dbReference type="CTD" id="6857"/>
<dbReference type="FlyBase" id="FBgn0004242">
    <property type="gene designation" value="Syt1"/>
</dbReference>
<dbReference type="VEuPathDB" id="VectorBase:FBgn0004242"/>
<dbReference type="eggNOG" id="KOG1028">
    <property type="taxonomic scope" value="Eukaryota"/>
</dbReference>
<dbReference type="GeneTree" id="ENSGT00940000168041"/>
<dbReference type="InParanoid" id="P21521"/>
<dbReference type="OMA" id="RCILGCS"/>
<dbReference type="OrthoDB" id="67700at2759"/>
<dbReference type="PhylomeDB" id="P21521"/>
<dbReference type="Reactome" id="R-DME-181429">
    <property type="pathway name" value="Serotonin Neurotransmitter Release Cycle"/>
</dbReference>
<dbReference type="Reactome" id="R-DME-181430">
    <property type="pathway name" value="Norepinephrine Neurotransmitter Release Cycle"/>
</dbReference>
<dbReference type="Reactome" id="R-DME-210500">
    <property type="pathway name" value="Glutamate Neurotransmitter Release Cycle"/>
</dbReference>
<dbReference type="Reactome" id="R-DME-212676">
    <property type="pathway name" value="Dopamine Neurotransmitter Release Cycle"/>
</dbReference>
<dbReference type="Reactome" id="R-DME-264642">
    <property type="pathway name" value="Acetylcholine Neurotransmitter Release Cycle"/>
</dbReference>
<dbReference type="Reactome" id="R-DME-8856825">
    <property type="pathway name" value="Cargo recognition for clathrin-mediated endocytosis"/>
</dbReference>
<dbReference type="Reactome" id="R-DME-8856828">
    <property type="pathway name" value="Clathrin-mediated endocytosis"/>
</dbReference>
<dbReference type="Reactome" id="R-DME-888590">
    <property type="pathway name" value="GABA synthesis, release, reuptake and degradation"/>
</dbReference>
<dbReference type="BioGRID-ORCS" id="33473">
    <property type="hits" value="0 hits in 3 CRISPR screens"/>
</dbReference>
<dbReference type="GenomeRNAi" id="33473"/>
<dbReference type="PRO" id="PR:P21521"/>
<dbReference type="Proteomes" id="UP000000803">
    <property type="component" value="Chromosome 2L"/>
</dbReference>
<dbReference type="Bgee" id="FBgn0004242">
    <property type="expression patterns" value="Expressed in transmedullary neuron Tm29 in insect head and 216 other cell types or tissues"/>
</dbReference>
<dbReference type="ExpressionAtlas" id="P21521">
    <property type="expression patterns" value="baseline and differential"/>
</dbReference>
<dbReference type="GO" id="GO:0030424">
    <property type="term" value="C:axon"/>
    <property type="evidence" value="ECO:0000318"/>
    <property type="project" value="GO_Central"/>
</dbReference>
<dbReference type="GO" id="GO:0031045">
    <property type="term" value="C:dense core granule"/>
    <property type="evidence" value="ECO:0000318"/>
    <property type="project" value="GO_Central"/>
</dbReference>
<dbReference type="GO" id="GO:0070382">
    <property type="term" value="C:exocytic vesicle"/>
    <property type="evidence" value="ECO:0000318"/>
    <property type="project" value="GO_Central"/>
</dbReference>
<dbReference type="GO" id="GO:0016020">
    <property type="term" value="C:membrane"/>
    <property type="evidence" value="ECO:0000255"/>
    <property type="project" value="FlyBase"/>
</dbReference>
<dbReference type="GO" id="GO:0031594">
    <property type="term" value="C:neuromuscular junction"/>
    <property type="evidence" value="ECO:0000314"/>
    <property type="project" value="FlyBase"/>
</dbReference>
<dbReference type="GO" id="GO:0005886">
    <property type="term" value="C:plasma membrane"/>
    <property type="evidence" value="ECO:0000318"/>
    <property type="project" value="GO_Central"/>
</dbReference>
<dbReference type="GO" id="GO:0008021">
    <property type="term" value="C:synaptic vesicle"/>
    <property type="evidence" value="ECO:0000314"/>
    <property type="project" value="FlyBase"/>
</dbReference>
<dbReference type="GO" id="GO:0030672">
    <property type="term" value="C:synaptic vesicle membrane"/>
    <property type="evidence" value="ECO:0000318"/>
    <property type="project" value="GO_Central"/>
</dbReference>
<dbReference type="GO" id="GO:0043195">
    <property type="term" value="C:terminal bouton"/>
    <property type="evidence" value="ECO:0000314"/>
    <property type="project" value="FlyBase"/>
</dbReference>
<dbReference type="GO" id="GO:0005509">
    <property type="term" value="F:calcium ion binding"/>
    <property type="evidence" value="ECO:0000314"/>
    <property type="project" value="FlyBase"/>
</dbReference>
<dbReference type="GO" id="GO:0061891">
    <property type="term" value="F:calcium ion sensor activity"/>
    <property type="evidence" value="ECO:0000318"/>
    <property type="project" value="GO_Central"/>
</dbReference>
<dbReference type="GO" id="GO:0005544">
    <property type="term" value="F:calcium-dependent phospholipid binding"/>
    <property type="evidence" value="ECO:0000314"/>
    <property type="project" value="FlyBase"/>
</dbReference>
<dbReference type="GO" id="GO:0001786">
    <property type="term" value="F:phosphatidylserine binding"/>
    <property type="evidence" value="ECO:0000314"/>
    <property type="project" value="FlyBase"/>
</dbReference>
<dbReference type="GO" id="GO:0042803">
    <property type="term" value="F:protein homodimerization activity"/>
    <property type="evidence" value="ECO:0000314"/>
    <property type="project" value="FlyBase"/>
</dbReference>
<dbReference type="GO" id="GO:0000149">
    <property type="term" value="F:SNARE binding"/>
    <property type="evidence" value="ECO:0000353"/>
    <property type="project" value="FlyBase"/>
</dbReference>
<dbReference type="GO" id="GO:0048791">
    <property type="term" value="P:calcium ion-regulated exocytosis of neurotransmitter"/>
    <property type="evidence" value="ECO:0000315"/>
    <property type="project" value="FlyBase"/>
</dbReference>
<dbReference type="GO" id="GO:0099502">
    <property type="term" value="P:calcium-dependent activation of synaptic vesicle fusion"/>
    <property type="evidence" value="ECO:0000318"/>
    <property type="project" value="GO_Central"/>
</dbReference>
<dbReference type="GO" id="GO:0007268">
    <property type="term" value="P:chemical synaptic transmission"/>
    <property type="evidence" value="ECO:0000314"/>
    <property type="project" value="FlyBase"/>
</dbReference>
<dbReference type="GO" id="GO:0150007">
    <property type="term" value="P:clathrin-dependent synaptic vesicle endocytosis"/>
    <property type="evidence" value="ECO:0000314"/>
    <property type="project" value="FlyBase"/>
</dbReference>
<dbReference type="GO" id="GO:0008345">
    <property type="term" value="P:larval locomotory behavior"/>
    <property type="evidence" value="ECO:0000315"/>
    <property type="project" value="FlyBase"/>
</dbReference>
<dbReference type="GO" id="GO:0035002">
    <property type="term" value="P:liquid clearance, open tracheal system"/>
    <property type="evidence" value="ECO:0000315"/>
    <property type="project" value="FlyBase"/>
</dbReference>
<dbReference type="GO" id="GO:0061025">
    <property type="term" value="P:membrane fusion"/>
    <property type="evidence" value="ECO:0000315"/>
    <property type="project" value="FlyBase"/>
</dbReference>
<dbReference type="GO" id="GO:0007269">
    <property type="term" value="P:neurotransmitter secretion"/>
    <property type="evidence" value="ECO:0000315"/>
    <property type="project" value="FlyBase"/>
</dbReference>
<dbReference type="GO" id="GO:0031340">
    <property type="term" value="P:positive regulation of vesicle fusion"/>
    <property type="evidence" value="ECO:0000314"/>
    <property type="project" value="FlyBase"/>
</dbReference>
<dbReference type="GO" id="GO:0017158">
    <property type="term" value="P:regulation of calcium ion-dependent exocytosis"/>
    <property type="evidence" value="ECO:0000318"/>
    <property type="project" value="GO_Central"/>
</dbReference>
<dbReference type="GO" id="GO:1900073">
    <property type="term" value="P:regulation of neuromuscular synaptic transmission"/>
    <property type="evidence" value="ECO:0000315"/>
    <property type="project" value="FlyBase"/>
</dbReference>
<dbReference type="GO" id="GO:0007317">
    <property type="term" value="P:regulation of pole plasm oskar mRNA localization"/>
    <property type="evidence" value="ECO:0000315"/>
    <property type="project" value="FlyBase"/>
</dbReference>
<dbReference type="GO" id="GO:0050803">
    <property type="term" value="P:regulation of synapse structure or activity"/>
    <property type="evidence" value="ECO:0000315"/>
    <property type="project" value="FlyBase"/>
</dbReference>
<dbReference type="GO" id="GO:2000300">
    <property type="term" value="P:regulation of synaptic vesicle exocytosis"/>
    <property type="evidence" value="ECO:0000318"/>
    <property type="project" value="GO_Central"/>
</dbReference>
<dbReference type="GO" id="GO:0060024">
    <property type="term" value="P:rhythmic synaptic transmission"/>
    <property type="evidence" value="ECO:0000314"/>
    <property type="project" value="FlyBase"/>
</dbReference>
<dbReference type="GO" id="GO:0033299">
    <property type="term" value="P:secretion of lysosomal enzymes"/>
    <property type="evidence" value="ECO:0000315"/>
    <property type="project" value="FlyBase"/>
</dbReference>
<dbReference type="GO" id="GO:0048488">
    <property type="term" value="P:synaptic vesicle endocytosis"/>
    <property type="evidence" value="ECO:0000315"/>
    <property type="project" value="FlyBase"/>
</dbReference>
<dbReference type="GO" id="GO:0016079">
    <property type="term" value="P:synaptic vesicle exocytosis"/>
    <property type="evidence" value="ECO:0000250"/>
    <property type="project" value="FlyBase"/>
</dbReference>
<dbReference type="GO" id="GO:0016192">
    <property type="term" value="P:vesicle-mediated transport"/>
    <property type="evidence" value="ECO:0000315"/>
    <property type="project" value="FlyBase"/>
</dbReference>
<dbReference type="CDD" id="cd08385">
    <property type="entry name" value="C2A_Synaptotagmin-1-5-6-9-10"/>
    <property type="match status" value="1"/>
</dbReference>
<dbReference type="CDD" id="cd08402">
    <property type="entry name" value="C2B_Synaptotagmin-1"/>
    <property type="match status" value="1"/>
</dbReference>
<dbReference type="FunFam" id="2.60.40.150:FF:000007">
    <property type="entry name" value="Synaptotagmin 1"/>
    <property type="match status" value="1"/>
</dbReference>
<dbReference type="FunFam" id="2.60.40.150:FF:000016">
    <property type="entry name" value="Synaptotagmin 1"/>
    <property type="match status" value="1"/>
</dbReference>
<dbReference type="Gene3D" id="2.60.40.150">
    <property type="entry name" value="C2 domain"/>
    <property type="match status" value="2"/>
</dbReference>
<dbReference type="InterPro" id="IPR000008">
    <property type="entry name" value="C2_dom"/>
</dbReference>
<dbReference type="InterPro" id="IPR035892">
    <property type="entry name" value="C2_domain_sf"/>
</dbReference>
<dbReference type="InterPro" id="IPR001565">
    <property type="entry name" value="Synaptotagmin"/>
</dbReference>
<dbReference type="PANTHER" id="PTHR10024">
    <property type="entry name" value="SYNAPTOTAGMIN"/>
    <property type="match status" value="1"/>
</dbReference>
<dbReference type="PANTHER" id="PTHR10024:SF227">
    <property type="entry name" value="SYNAPTOTAGMIN 1"/>
    <property type="match status" value="1"/>
</dbReference>
<dbReference type="Pfam" id="PF00168">
    <property type="entry name" value="C2"/>
    <property type="match status" value="2"/>
</dbReference>
<dbReference type="PRINTS" id="PR00360">
    <property type="entry name" value="C2DOMAIN"/>
</dbReference>
<dbReference type="PRINTS" id="PR00399">
    <property type="entry name" value="SYNAPTOTAGMN"/>
</dbReference>
<dbReference type="SMART" id="SM00239">
    <property type="entry name" value="C2"/>
    <property type="match status" value="2"/>
</dbReference>
<dbReference type="SUPFAM" id="SSF49562">
    <property type="entry name" value="C2 domain (Calcium/lipid-binding domain, CaLB)"/>
    <property type="match status" value="2"/>
</dbReference>
<dbReference type="PROSITE" id="PS50004">
    <property type="entry name" value="C2"/>
    <property type="match status" value="2"/>
</dbReference>